<keyword id="KW-0963">Cytoplasm</keyword>
<keyword id="KW-0520">NAD</keyword>
<keyword id="KW-0560">Oxidoreductase</keyword>
<keyword id="KW-0597">Phosphoprotein</keyword>
<sequence>MKPIKIALIGAGNVGNSFLYAAMNQGLASEYGIIDINPDFADGNAFDFEDASASLPFPISVSRYEYKDLKDADFIVITAGRPQKPGETRLELVADNIRIIREIALKVKESGFSGISIIVANPVDIITRAYRDASGFSDQKVIGSGTVLDTARLQFAIAKRAKVSPNSVQAYVMGEHGDSSFVAYSNIKIAGEYFCAYSKLTGIDSSNYEKELEYPVSRRAYEIINRKRATFYGIGAAIAKIVSNIIKDTKNIMIAGANLRGEYGFHGVNIGVPVVLGANGIEKIIEISLNDKEKEKFAKSVAIIDKIYQDAIKNI</sequence>
<evidence type="ECO:0000255" key="1">
    <source>
        <dbReference type="HAMAP-Rule" id="MF_00488"/>
    </source>
</evidence>
<evidence type="ECO:0000305" key="2"/>
<accession>P0C0J2</accession>
<accession>P33572</accession>
<accession>Q601F7</accession>
<feature type="chain" id="PRO_0000168370" description="L-lactate dehydrogenase">
    <location>
        <begin position="1"/>
        <end position="315"/>
    </location>
</feature>
<feature type="active site" description="Proton acceptor" evidence="1">
    <location>
        <position position="176"/>
    </location>
</feature>
<feature type="binding site" evidence="1">
    <location>
        <position position="14"/>
    </location>
    <ligand>
        <name>NAD(+)</name>
        <dbReference type="ChEBI" id="CHEBI:57540"/>
    </ligand>
</feature>
<feature type="binding site" evidence="1">
    <location>
        <position position="35"/>
    </location>
    <ligand>
        <name>NAD(+)</name>
        <dbReference type="ChEBI" id="CHEBI:57540"/>
    </ligand>
</feature>
<feature type="binding site" evidence="1">
    <location>
        <position position="66"/>
    </location>
    <ligand>
        <name>NAD(+)</name>
        <dbReference type="ChEBI" id="CHEBI:57540"/>
    </ligand>
</feature>
<feature type="binding site" evidence="1">
    <location>
        <position position="83"/>
    </location>
    <ligand>
        <name>substrate</name>
    </ligand>
</feature>
<feature type="binding site" evidence="1">
    <location>
        <position position="89"/>
    </location>
    <ligand>
        <name>substrate</name>
    </ligand>
</feature>
<feature type="binding site" evidence="1">
    <location>
        <begin position="119"/>
        <end position="121"/>
    </location>
    <ligand>
        <name>NAD(+)</name>
        <dbReference type="ChEBI" id="CHEBI:57540"/>
    </ligand>
</feature>
<feature type="binding site" evidence="1">
    <location>
        <begin position="121"/>
        <end position="124"/>
    </location>
    <ligand>
        <name>substrate</name>
    </ligand>
</feature>
<feature type="binding site" evidence="1">
    <location>
        <position position="144"/>
    </location>
    <ligand>
        <name>NAD(+)</name>
        <dbReference type="ChEBI" id="CHEBI:57540"/>
    </ligand>
</feature>
<feature type="binding site" evidence="1">
    <location>
        <begin position="149"/>
        <end position="152"/>
    </location>
    <ligand>
        <name>substrate</name>
    </ligand>
</feature>
<feature type="binding site" evidence="1">
    <location>
        <position position="230"/>
    </location>
    <ligand>
        <name>substrate</name>
    </ligand>
</feature>
<feature type="modified residue" description="Phosphotyrosine" evidence="1">
    <location>
        <position position="221"/>
    </location>
</feature>
<proteinExistence type="inferred from homology"/>
<dbReference type="EC" id="1.1.1.27" evidence="1"/>
<dbReference type="EMBL" id="AE017332">
    <property type="protein sequence ID" value="AAV27786.1"/>
    <property type="status" value="ALT_INIT"/>
    <property type="molecule type" value="Genomic_DNA"/>
</dbReference>
<dbReference type="RefSeq" id="WP_044284824.1">
    <property type="nucleotide sequence ID" value="NC_006360.1"/>
</dbReference>
<dbReference type="SMR" id="P0C0J2"/>
<dbReference type="KEGG" id="mhy:mhp245"/>
<dbReference type="eggNOG" id="COG0039">
    <property type="taxonomic scope" value="Bacteria"/>
</dbReference>
<dbReference type="HOGENOM" id="CLU_045401_1_2_14"/>
<dbReference type="PhylomeDB" id="P0C0J2"/>
<dbReference type="UniPathway" id="UPA00554">
    <property type="reaction ID" value="UER00611"/>
</dbReference>
<dbReference type="Proteomes" id="UP000006822">
    <property type="component" value="Chromosome"/>
</dbReference>
<dbReference type="GO" id="GO:0005737">
    <property type="term" value="C:cytoplasm"/>
    <property type="evidence" value="ECO:0007669"/>
    <property type="project" value="UniProtKB-SubCell"/>
</dbReference>
<dbReference type="GO" id="GO:0004459">
    <property type="term" value="F:L-lactate dehydrogenase activity"/>
    <property type="evidence" value="ECO:0007669"/>
    <property type="project" value="UniProtKB-UniRule"/>
</dbReference>
<dbReference type="GO" id="GO:0006096">
    <property type="term" value="P:glycolytic process"/>
    <property type="evidence" value="ECO:0007669"/>
    <property type="project" value="UniProtKB-UniRule"/>
</dbReference>
<dbReference type="GO" id="GO:0006089">
    <property type="term" value="P:lactate metabolic process"/>
    <property type="evidence" value="ECO:0007669"/>
    <property type="project" value="TreeGrafter"/>
</dbReference>
<dbReference type="CDD" id="cd05291">
    <property type="entry name" value="HicDH_like"/>
    <property type="match status" value="1"/>
</dbReference>
<dbReference type="Gene3D" id="3.90.110.10">
    <property type="entry name" value="Lactate dehydrogenase/glycoside hydrolase, family 4, C-terminal"/>
    <property type="match status" value="1"/>
</dbReference>
<dbReference type="Gene3D" id="3.40.50.720">
    <property type="entry name" value="NAD(P)-binding Rossmann-like Domain"/>
    <property type="match status" value="1"/>
</dbReference>
<dbReference type="HAMAP" id="MF_00488">
    <property type="entry name" value="Lactate_dehydrog"/>
    <property type="match status" value="1"/>
</dbReference>
<dbReference type="InterPro" id="IPR001557">
    <property type="entry name" value="L-lactate/malate_DH"/>
</dbReference>
<dbReference type="InterPro" id="IPR011304">
    <property type="entry name" value="L-lactate_DH"/>
</dbReference>
<dbReference type="InterPro" id="IPR018177">
    <property type="entry name" value="L-lactate_DH_AS"/>
</dbReference>
<dbReference type="InterPro" id="IPR022383">
    <property type="entry name" value="Lactate/malate_DH_C"/>
</dbReference>
<dbReference type="InterPro" id="IPR001236">
    <property type="entry name" value="Lactate/malate_DH_N"/>
</dbReference>
<dbReference type="InterPro" id="IPR015955">
    <property type="entry name" value="Lactate_DH/Glyco_Ohase_4_C"/>
</dbReference>
<dbReference type="InterPro" id="IPR036291">
    <property type="entry name" value="NAD(P)-bd_dom_sf"/>
</dbReference>
<dbReference type="NCBIfam" id="TIGR01771">
    <property type="entry name" value="L-LDH-NAD"/>
    <property type="match status" value="1"/>
</dbReference>
<dbReference type="PANTHER" id="PTHR43128">
    <property type="entry name" value="L-2-HYDROXYCARBOXYLATE DEHYDROGENASE (NAD(P)(+))"/>
    <property type="match status" value="1"/>
</dbReference>
<dbReference type="PANTHER" id="PTHR43128:SF16">
    <property type="entry name" value="L-LACTATE DEHYDROGENASE"/>
    <property type="match status" value="1"/>
</dbReference>
<dbReference type="Pfam" id="PF02866">
    <property type="entry name" value="Ldh_1_C"/>
    <property type="match status" value="1"/>
</dbReference>
<dbReference type="Pfam" id="PF00056">
    <property type="entry name" value="Ldh_1_N"/>
    <property type="match status" value="1"/>
</dbReference>
<dbReference type="PIRSF" id="PIRSF000102">
    <property type="entry name" value="Lac_mal_DH"/>
    <property type="match status" value="1"/>
</dbReference>
<dbReference type="PRINTS" id="PR00086">
    <property type="entry name" value="LLDHDRGNASE"/>
</dbReference>
<dbReference type="SUPFAM" id="SSF56327">
    <property type="entry name" value="LDH C-terminal domain-like"/>
    <property type="match status" value="1"/>
</dbReference>
<dbReference type="SUPFAM" id="SSF51735">
    <property type="entry name" value="NAD(P)-binding Rossmann-fold domains"/>
    <property type="match status" value="1"/>
</dbReference>
<dbReference type="PROSITE" id="PS00064">
    <property type="entry name" value="L_LDH"/>
    <property type="match status" value="1"/>
</dbReference>
<protein>
    <recommendedName>
        <fullName evidence="1">L-lactate dehydrogenase</fullName>
        <shortName evidence="1">L-LDH</shortName>
        <ecNumber evidence="1">1.1.1.27</ecNumber>
    </recommendedName>
    <alternativeName>
        <fullName>Immunogenic protein p36</fullName>
    </alternativeName>
</protein>
<organism>
    <name type="scientific">Mesomycoplasma hyopneumoniae (strain 232)</name>
    <name type="common">Mycoplasma hyopneumoniae</name>
    <dbReference type="NCBI Taxonomy" id="295358"/>
    <lineage>
        <taxon>Bacteria</taxon>
        <taxon>Bacillati</taxon>
        <taxon>Mycoplasmatota</taxon>
        <taxon>Mycoplasmoidales</taxon>
        <taxon>Metamycoplasmataceae</taxon>
        <taxon>Mesomycoplasma</taxon>
    </lineage>
</organism>
<name>LDH_MESH2</name>
<comment type="function">
    <text evidence="1">Catalyzes the conversion of lactate to pyruvate.</text>
</comment>
<comment type="catalytic activity">
    <reaction evidence="1">
        <text>(S)-lactate + NAD(+) = pyruvate + NADH + H(+)</text>
        <dbReference type="Rhea" id="RHEA:23444"/>
        <dbReference type="ChEBI" id="CHEBI:15361"/>
        <dbReference type="ChEBI" id="CHEBI:15378"/>
        <dbReference type="ChEBI" id="CHEBI:16651"/>
        <dbReference type="ChEBI" id="CHEBI:57540"/>
        <dbReference type="ChEBI" id="CHEBI:57945"/>
        <dbReference type="EC" id="1.1.1.27"/>
    </reaction>
</comment>
<comment type="pathway">
    <text evidence="1">Fermentation; pyruvate fermentation to lactate; (S)-lactate from pyruvate: step 1/1.</text>
</comment>
<comment type="subunit">
    <text evidence="1">Homotetramer.</text>
</comment>
<comment type="subcellular location">
    <subcellularLocation>
        <location evidence="1">Cytoplasm</location>
    </subcellularLocation>
</comment>
<comment type="similarity">
    <text evidence="1 2">Belongs to the LDH/MDH superfamily. LDH family.</text>
</comment>
<comment type="sequence caution" evidence="2">
    <conflict type="erroneous initiation">
        <sequence resource="EMBL-CDS" id="AAV27786"/>
    </conflict>
</comment>
<reference key="1">
    <citation type="journal article" date="2004" name="J. Bacteriol.">
        <title>The genome sequence of Mycoplasma hyopneumoniae strain 232, the agent of swine mycoplasmosis.</title>
        <authorList>
            <person name="Minion F.C."/>
            <person name="Lefkowitz E.J."/>
            <person name="Madsen M.L."/>
            <person name="Cleary B.J."/>
            <person name="Swartzell S.M."/>
            <person name="Mahairas G.G."/>
        </authorList>
    </citation>
    <scope>NUCLEOTIDE SEQUENCE [LARGE SCALE GENOMIC DNA]</scope>
    <source>
        <strain>232</strain>
    </source>
</reference>
<gene>
    <name evidence="1" type="primary">ldh</name>
    <name type="synonym">ictD</name>
    <name type="ordered locus">mhp245</name>
</gene>